<evidence type="ECO:0000255" key="1">
    <source>
        <dbReference type="HAMAP-Rule" id="MF_00267"/>
    </source>
</evidence>
<evidence type="ECO:0000256" key="2">
    <source>
        <dbReference type="SAM" id="MobiDB-lite"/>
    </source>
</evidence>
<comment type="function">
    <text evidence="1">Cell division inhibitor that blocks the formation of polar Z ring septums. Rapidly oscillates between the poles of the cell to destabilize FtsZ filaments that have formed before they mature into polar Z rings. Prevents FtsZ polymerization.</text>
</comment>
<comment type="subunit">
    <text evidence="1">Interacts with MinD and FtsZ.</text>
</comment>
<comment type="similarity">
    <text evidence="1">Belongs to the MinC family.</text>
</comment>
<proteinExistence type="inferred from homology"/>
<organism>
    <name type="scientific">Burkholderia pseudomallei (strain 668)</name>
    <dbReference type="NCBI Taxonomy" id="320373"/>
    <lineage>
        <taxon>Bacteria</taxon>
        <taxon>Pseudomonadati</taxon>
        <taxon>Pseudomonadota</taxon>
        <taxon>Betaproteobacteria</taxon>
        <taxon>Burkholderiales</taxon>
        <taxon>Burkholderiaceae</taxon>
        <taxon>Burkholderia</taxon>
        <taxon>pseudomallei group</taxon>
    </lineage>
</organism>
<reference key="1">
    <citation type="journal article" date="2010" name="Genome Biol. Evol.">
        <title>Continuing evolution of Burkholderia mallei through genome reduction and large-scale rearrangements.</title>
        <authorList>
            <person name="Losada L."/>
            <person name="Ronning C.M."/>
            <person name="DeShazer D."/>
            <person name="Woods D."/>
            <person name="Fedorova N."/>
            <person name="Kim H.S."/>
            <person name="Shabalina S.A."/>
            <person name="Pearson T.R."/>
            <person name="Brinkac L."/>
            <person name="Tan P."/>
            <person name="Nandi T."/>
            <person name="Crabtree J."/>
            <person name="Badger J."/>
            <person name="Beckstrom-Sternberg S."/>
            <person name="Saqib M."/>
            <person name="Schutzer S.E."/>
            <person name="Keim P."/>
            <person name="Nierman W.C."/>
        </authorList>
    </citation>
    <scope>NUCLEOTIDE SEQUENCE [LARGE SCALE GENOMIC DNA]</scope>
    <source>
        <strain>668</strain>
    </source>
</reference>
<keyword id="KW-0131">Cell cycle</keyword>
<keyword id="KW-0132">Cell division</keyword>
<keyword id="KW-0717">Septation</keyword>
<sequence>MSLKKSPFFELRSGSVDTLLFIVKTADLDALRAELVKRFEATPEFFADDVVAIDVRRLAGHERVPLDDIRGMLNDVRMRAIGVVAQPEQHAWAASAGLPLLEARDRRAPSSKAADEAPVQQAEPAAPAAGQAALFEQAGPTLADAGAPPESPAPAVAAQSATLVVDRPLRSGQQIYAKGDLVVLGPVSYGAEVIAEGNIHIYAPLRGRALAGVHGNHDARIFCTCLEPELISIAGIYRTTENPLPADVLGKSVQIRLEQEKLMIEPLRLT</sequence>
<gene>
    <name evidence="1" type="primary">minC</name>
    <name type="ordered locus">BURPS668_2968</name>
</gene>
<accession>A3NCB1</accession>
<name>MINC_BURP6</name>
<dbReference type="EMBL" id="CP000570">
    <property type="protein sequence ID" value="ABN83285.1"/>
    <property type="molecule type" value="Genomic_DNA"/>
</dbReference>
<dbReference type="RefSeq" id="WP_011852022.1">
    <property type="nucleotide sequence ID" value="NC_009074.1"/>
</dbReference>
<dbReference type="SMR" id="A3NCB1"/>
<dbReference type="KEGG" id="bpd:BURPS668_2968"/>
<dbReference type="HOGENOM" id="CLU_067812_0_0_4"/>
<dbReference type="GO" id="GO:0000902">
    <property type="term" value="P:cell morphogenesis"/>
    <property type="evidence" value="ECO:0007669"/>
    <property type="project" value="InterPro"/>
</dbReference>
<dbReference type="GO" id="GO:0000917">
    <property type="term" value="P:division septum assembly"/>
    <property type="evidence" value="ECO:0007669"/>
    <property type="project" value="UniProtKB-KW"/>
</dbReference>
<dbReference type="GO" id="GO:0051302">
    <property type="term" value="P:regulation of cell division"/>
    <property type="evidence" value="ECO:0007669"/>
    <property type="project" value="InterPro"/>
</dbReference>
<dbReference type="GO" id="GO:1901891">
    <property type="term" value="P:regulation of cell septum assembly"/>
    <property type="evidence" value="ECO:0007669"/>
    <property type="project" value="InterPro"/>
</dbReference>
<dbReference type="Gene3D" id="2.160.20.70">
    <property type="match status" value="1"/>
</dbReference>
<dbReference type="Gene3D" id="3.30.70.260">
    <property type="match status" value="1"/>
</dbReference>
<dbReference type="HAMAP" id="MF_00267">
    <property type="entry name" value="MinC"/>
    <property type="match status" value="1"/>
</dbReference>
<dbReference type="InterPro" id="IPR016098">
    <property type="entry name" value="CAP/MinC_C"/>
</dbReference>
<dbReference type="InterPro" id="IPR013033">
    <property type="entry name" value="MinC"/>
</dbReference>
<dbReference type="InterPro" id="IPR036145">
    <property type="entry name" value="MinC_C_sf"/>
</dbReference>
<dbReference type="InterPro" id="IPR007874">
    <property type="entry name" value="MinC_N"/>
</dbReference>
<dbReference type="InterPro" id="IPR005526">
    <property type="entry name" value="Septum_form_inhib_MinC_C"/>
</dbReference>
<dbReference type="NCBIfam" id="TIGR01222">
    <property type="entry name" value="minC"/>
    <property type="match status" value="1"/>
</dbReference>
<dbReference type="PANTHER" id="PTHR34108">
    <property type="entry name" value="SEPTUM SITE-DETERMINING PROTEIN MINC"/>
    <property type="match status" value="1"/>
</dbReference>
<dbReference type="PANTHER" id="PTHR34108:SF1">
    <property type="entry name" value="SEPTUM SITE-DETERMINING PROTEIN MINC"/>
    <property type="match status" value="1"/>
</dbReference>
<dbReference type="Pfam" id="PF03775">
    <property type="entry name" value="MinC_C"/>
    <property type="match status" value="1"/>
</dbReference>
<dbReference type="Pfam" id="PF05209">
    <property type="entry name" value="MinC_N"/>
    <property type="match status" value="1"/>
</dbReference>
<dbReference type="SUPFAM" id="SSF63848">
    <property type="entry name" value="Cell-division inhibitor MinC, C-terminal domain"/>
    <property type="match status" value="1"/>
</dbReference>
<protein>
    <recommendedName>
        <fullName evidence="1">Probable septum site-determining protein MinC</fullName>
    </recommendedName>
</protein>
<feature type="chain" id="PRO_1000047816" description="Probable septum site-determining protein MinC">
    <location>
        <begin position="1"/>
        <end position="270"/>
    </location>
</feature>
<feature type="region of interest" description="Disordered" evidence="2">
    <location>
        <begin position="105"/>
        <end position="129"/>
    </location>
</feature>
<feature type="compositionally biased region" description="Low complexity" evidence="2">
    <location>
        <begin position="116"/>
        <end position="129"/>
    </location>
</feature>